<proteinExistence type="inferred from homology"/>
<accession>I1RNG8</accession>
<accession>A0A098E0U2</accession>
<accession>A0A1C3YJQ0</accession>
<feature type="chain" id="PRO_0000443863" description="Serine/threonine-protein kinase ATG1">
    <location>
        <begin position="1"/>
        <end position="944"/>
    </location>
</feature>
<feature type="domain" description="Protein kinase" evidence="3">
    <location>
        <begin position="24"/>
        <end position="327"/>
    </location>
</feature>
<feature type="region of interest" description="Disordered" evidence="4">
    <location>
        <begin position="344"/>
        <end position="423"/>
    </location>
</feature>
<feature type="region of interest" description="Disordered" evidence="4">
    <location>
        <begin position="443"/>
        <end position="475"/>
    </location>
</feature>
<feature type="region of interest" description="Disordered" evidence="4">
    <location>
        <begin position="512"/>
        <end position="572"/>
    </location>
</feature>
<feature type="region of interest" description="Disordered" evidence="4">
    <location>
        <begin position="777"/>
        <end position="801"/>
    </location>
</feature>
<feature type="region of interest" description="Disordered" evidence="4">
    <location>
        <begin position="860"/>
        <end position="895"/>
    </location>
</feature>
<feature type="region of interest" description="Required for Cvt trafficking" evidence="1">
    <location>
        <begin position="924"/>
        <end position="930"/>
    </location>
</feature>
<feature type="region of interest" description="Disordered" evidence="4">
    <location>
        <begin position="925"/>
        <end position="944"/>
    </location>
</feature>
<feature type="short sequence motif" description="LIR" evidence="1">
    <location>
        <begin position="428"/>
        <end position="431"/>
    </location>
</feature>
<feature type="compositionally biased region" description="Low complexity" evidence="4">
    <location>
        <begin position="356"/>
        <end position="367"/>
    </location>
</feature>
<feature type="compositionally biased region" description="Polar residues" evidence="4">
    <location>
        <begin position="447"/>
        <end position="459"/>
    </location>
</feature>
<feature type="compositionally biased region" description="Polar residues" evidence="4">
    <location>
        <begin position="516"/>
        <end position="549"/>
    </location>
</feature>
<feature type="compositionally biased region" description="Low complexity" evidence="4">
    <location>
        <begin position="563"/>
        <end position="572"/>
    </location>
</feature>
<feature type="compositionally biased region" description="Polar residues" evidence="4">
    <location>
        <begin position="785"/>
        <end position="801"/>
    </location>
</feature>
<feature type="compositionally biased region" description="Basic and acidic residues" evidence="4">
    <location>
        <begin position="865"/>
        <end position="881"/>
    </location>
</feature>
<feature type="active site" description="Proton acceptor" evidence="3">
    <location>
        <position position="167"/>
    </location>
</feature>
<feature type="binding site" evidence="3">
    <location>
        <begin position="30"/>
        <end position="38"/>
    </location>
    <ligand>
        <name>ATP</name>
        <dbReference type="ChEBI" id="CHEBI:30616"/>
    </ligand>
</feature>
<feature type="binding site" evidence="3">
    <location>
        <position position="53"/>
    </location>
    <ligand>
        <name>ATP</name>
        <dbReference type="ChEBI" id="CHEBI:30616"/>
    </ligand>
</feature>
<dbReference type="EC" id="2.7.11.1" evidence="1"/>
<dbReference type="EMBL" id="HG970334">
    <property type="protein sequence ID" value="SCB64773.1"/>
    <property type="status" value="ALT_SEQ"/>
    <property type="molecule type" value="Genomic_DNA"/>
</dbReference>
<dbReference type="RefSeq" id="XP_011324096.1">
    <property type="nucleotide sequence ID" value="XM_011325794.1"/>
</dbReference>
<dbReference type="SMR" id="I1RNG8"/>
<dbReference type="FunCoup" id="I1RNG8">
    <property type="interactions" value="77"/>
</dbReference>
<dbReference type="STRING" id="229533.I1RNG8"/>
<dbReference type="KEGG" id="fgr:FGSG_05547"/>
<dbReference type="eggNOG" id="KOG0595">
    <property type="taxonomic scope" value="Eukaryota"/>
</dbReference>
<dbReference type="HOGENOM" id="CLU_006447_0_0_1"/>
<dbReference type="InParanoid" id="I1RNG8"/>
<dbReference type="OrthoDB" id="76312at110618"/>
<dbReference type="PHI-base" id="PHI:1176"/>
<dbReference type="Proteomes" id="UP000070720">
    <property type="component" value="Chromosome 3"/>
</dbReference>
<dbReference type="GO" id="GO:0005776">
    <property type="term" value="C:autophagosome"/>
    <property type="evidence" value="ECO:0007669"/>
    <property type="project" value="TreeGrafter"/>
</dbReference>
<dbReference type="GO" id="GO:0005829">
    <property type="term" value="C:cytosol"/>
    <property type="evidence" value="ECO:0007669"/>
    <property type="project" value="TreeGrafter"/>
</dbReference>
<dbReference type="GO" id="GO:0034045">
    <property type="term" value="C:phagophore assembly site membrane"/>
    <property type="evidence" value="ECO:0007669"/>
    <property type="project" value="UniProtKB-SubCell"/>
</dbReference>
<dbReference type="GO" id="GO:0005524">
    <property type="term" value="F:ATP binding"/>
    <property type="evidence" value="ECO:0007669"/>
    <property type="project" value="UniProtKB-KW"/>
</dbReference>
<dbReference type="GO" id="GO:0106310">
    <property type="term" value="F:protein serine kinase activity"/>
    <property type="evidence" value="ECO:0007669"/>
    <property type="project" value="RHEA"/>
</dbReference>
<dbReference type="GO" id="GO:0004674">
    <property type="term" value="F:protein serine/threonine kinase activity"/>
    <property type="evidence" value="ECO:0007669"/>
    <property type="project" value="UniProtKB-KW"/>
</dbReference>
<dbReference type="GO" id="GO:0000045">
    <property type="term" value="P:autophagosome assembly"/>
    <property type="evidence" value="ECO:0007669"/>
    <property type="project" value="TreeGrafter"/>
</dbReference>
<dbReference type="GO" id="GO:0000422">
    <property type="term" value="P:autophagy of mitochondrion"/>
    <property type="evidence" value="ECO:0007669"/>
    <property type="project" value="TreeGrafter"/>
</dbReference>
<dbReference type="GO" id="GO:0034727">
    <property type="term" value="P:piecemeal microautophagy of the nucleus"/>
    <property type="evidence" value="ECO:0007669"/>
    <property type="project" value="TreeGrafter"/>
</dbReference>
<dbReference type="GO" id="GO:0015031">
    <property type="term" value="P:protein transport"/>
    <property type="evidence" value="ECO:0007669"/>
    <property type="project" value="UniProtKB-KW"/>
</dbReference>
<dbReference type="GO" id="GO:0010506">
    <property type="term" value="P:regulation of autophagy"/>
    <property type="evidence" value="ECO:0007669"/>
    <property type="project" value="InterPro"/>
</dbReference>
<dbReference type="GO" id="GO:0042594">
    <property type="term" value="P:response to starvation"/>
    <property type="evidence" value="ECO:0007669"/>
    <property type="project" value="TreeGrafter"/>
</dbReference>
<dbReference type="GO" id="GO:0061709">
    <property type="term" value="P:reticulophagy"/>
    <property type="evidence" value="ECO:0007669"/>
    <property type="project" value="TreeGrafter"/>
</dbReference>
<dbReference type="CDD" id="cd14009">
    <property type="entry name" value="STKc_ATG1_ULK_like"/>
    <property type="match status" value="1"/>
</dbReference>
<dbReference type="FunFam" id="3.30.200.20:FF:000042">
    <property type="entry name" value="Aurora kinase A"/>
    <property type="match status" value="1"/>
</dbReference>
<dbReference type="FunFam" id="1.10.510.10:FF:000817">
    <property type="entry name" value="Serine/threonine-protein kinase ATG1"/>
    <property type="match status" value="1"/>
</dbReference>
<dbReference type="Gene3D" id="1.10.510.10">
    <property type="entry name" value="Transferase(Phosphotransferase) domain 1"/>
    <property type="match status" value="1"/>
</dbReference>
<dbReference type="InterPro" id="IPR045269">
    <property type="entry name" value="Atg1-like"/>
</dbReference>
<dbReference type="InterPro" id="IPR048941">
    <property type="entry name" value="ATG1-like_MIT2"/>
</dbReference>
<dbReference type="InterPro" id="IPR022708">
    <property type="entry name" value="Atg1-like_tMIT"/>
</dbReference>
<dbReference type="InterPro" id="IPR011009">
    <property type="entry name" value="Kinase-like_dom_sf"/>
</dbReference>
<dbReference type="InterPro" id="IPR000719">
    <property type="entry name" value="Prot_kinase_dom"/>
</dbReference>
<dbReference type="InterPro" id="IPR017441">
    <property type="entry name" value="Protein_kinase_ATP_BS"/>
</dbReference>
<dbReference type="InterPro" id="IPR008271">
    <property type="entry name" value="Ser/Thr_kinase_AS"/>
</dbReference>
<dbReference type="PANTHER" id="PTHR24348:SF22">
    <property type="entry name" value="NON-SPECIFIC SERINE_THREONINE PROTEIN KINASE"/>
    <property type="match status" value="1"/>
</dbReference>
<dbReference type="PANTHER" id="PTHR24348">
    <property type="entry name" value="SERINE/THREONINE-PROTEIN KINASE UNC-51-RELATED"/>
    <property type="match status" value="1"/>
</dbReference>
<dbReference type="Pfam" id="PF12063">
    <property type="entry name" value="ATG1-like_MIT1"/>
    <property type="match status" value="1"/>
</dbReference>
<dbReference type="Pfam" id="PF21127">
    <property type="entry name" value="ATG1-like_MIT2"/>
    <property type="match status" value="1"/>
</dbReference>
<dbReference type="Pfam" id="PF00069">
    <property type="entry name" value="Pkinase"/>
    <property type="match status" value="1"/>
</dbReference>
<dbReference type="SMART" id="SM00220">
    <property type="entry name" value="S_TKc"/>
    <property type="match status" value="1"/>
</dbReference>
<dbReference type="SUPFAM" id="SSF56112">
    <property type="entry name" value="Protein kinase-like (PK-like)"/>
    <property type="match status" value="1"/>
</dbReference>
<dbReference type="PROSITE" id="PS00107">
    <property type="entry name" value="PROTEIN_KINASE_ATP"/>
    <property type="match status" value="1"/>
</dbReference>
<dbReference type="PROSITE" id="PS50011">
    <property type="entry name" value="PROTEIN_KINASE_DOM"/>
    <property type="match status" value="1"/>
</dbReference>
<dbReference type="PROSITE" id="PS00108">
    <property type="entry name" value="PROTEIN_KINASE_ST"/>
    <property type="match status" value="1"/>
</dbReference>
<keyword id="KW-0067">ATP-binding</keyword>
<keyword id="KW-0072">Autophagy</keyword>
<keyword id="KW-0963">Cytoplasm</keyword>
<keyword id="KW-0418">Kinase</keyword>
<keyword id="KW-0472">Membrane</keyword>
<keyword id="KW-0547">Nucleotide-binding</keyword>
<keyword id="KW-0653">Protein transport</keyword>
<keyword id="KW-1185">Reference proteome</keyword>
<keyword id="KW-0723">Serine/threonine-protein kinase</keyword>
<keyword id="KW-0808">Transferase</keyword>
<keyword id="KW-0813">Transport</keyword>
<sequence length="944" mass="103814">MAGPQESSTSSGSRKSGSRAVGQFNIGSEIGKGSFAQVYLGWHKETKAAVAIKSVELERLNKKLRENLYSEIQILKTLRHPHIVALHDCIESTSHINLIMEYCELGDLSLFIKKREKLATHPATHDMARKYPSMPNSGLHEVVIRHFLKQLTSALEFLRSKNYVHRDVKPQNLLLLPSQPFRDQRSRPVMQASQDSLIPISGLASLPMLKLADFGFARVLPSTSLADTLCGSPLYMAPEILRYERYDAKADLWSVGTVLYEMSTGRPPFRARNHVELLRKIEAAEDVIKFPREVSITPELKALIRSLLKRSPVERLSFENFFTHQVVTSEIPGLVEDDIPKSLRQESRDPRSAFQSGSPSLSSRSPRQTGHQSPTEALVSRSPRDQQPRSPQVGSPGGSRYARRSNESQRTTGNSPREGGEGLGIRRPVAQHAMTAPVQQVAYDSVTGRNRASPPTSLLDQVRRNRALSNPPITEEERAAQDVALEREYVVVERRHVEVNALADELAANEKLGDASQRSGPITRRYTQQGAPTSTTGAISTPYSRNALATQPRHDRKSSYEKSLSASPGSASSAISKAIQDASLRLFGFKVPPLRASPKGPSPPLYQAFPTYPTPQAPVGLLGDGRNVQGTDEDGKAAQTIEELATRSDCVYGFAEVKYKQLVPLAPSADHILGGLEPEQLVNEEDGLTVEAIVALSEEALVLYVKSLTLLARAMDIASLWWSKKSRGDTGTGLSAAAAQTVVQRINAVVQWVRQRFNEVLEKSEIVRLKLTEAQKQLPDDHPSHPSNHGTESIASSAGSPTKQVYLTPGISAEKLMYDRALEMSRAAAIDEVTNENLSGCEISYITAIRMLEAVLDNDEGSGSETRRLSTGKEAEREAVKEVSGGELDSDEEAHVRKRRLAAVRKKQQMIAEANSKTNLVYQQAVRRRSGDMTPRSVPSHASS</sequence>
<gene>
    <name evidence="6" type="primary">ATG1</name>
    <name type="ORF">FG05547</name>
    <name type="ORF">FGRAMPH1_01T18179</name>
</gene>
<evidence type="ECO:0000250" key="1">
    <source>
        <dbReference type="UniProtKB" id="P53104"/>
    </source>
</evidence>
<evidence type="ECO:0000250" key="2">
    <source>
        <dbReference type="UniProtKB" id="W0T9X4"/>
    </source>
</evidence>
<evidence type="ECO:0000255" key="3">
    <source>
        <dbReference type="PROSITE-ProRule" id="PRU00159"/>
    </source>
</evidence>
<evidence type="ECO:0000256" key="4">
    <source>
        <dbReference type="SAM" id="MobiDB-lite"/>
    </source>
</evidence>
<evidence type="ECO:0000269" key="5">
    <source>
    </source>
</evidence>
<evidence type="ECO:0000303" key="6">
    <source>
    </source>
</evidence>
<evidence type="ECO:0000305" key="7"/>
<organism>
    <name type="scientific">Gibberella zeae (strain ATCC MYA-4620 / CBS 123657 / FGSC 9075 / NRRL 31084 / PH-1)</name>
    <name type="common">Wheat head blight fungus</name>
    <name type="synonym">Fusarium graminearum</name>
    <dbReference type="NCBI Taxonomy" id="229533"/>
    <lineage>
        <taxon>Eukaryota</taxon>
        <taxon>Fungi</taxon>
        <taxon>Dikarya</taxon>
        <taxon>Ascomycota</taxon>
        <taxon>Pezizomycotina</taxon>
        <taxon>Sordariomycetes</taxon>
        <taxon>Hypocreomycetidae</taxon>
        <taxon>Hypocreales</taxon>
        <taxon>Nectriaceae</taxon>
        <taxon>Fusarium</taxon>
    </lineage>
</organism>
<comment type="function">
    <text evidence="1 5">Serine/threonine protein kinase involved in the cytoplasm to vacuole transport (Cvt) and found to be essential in autophagy, where it is required for the formation of autophagosomes (By similarity). Involved in the clearance of protein aggregates which cannot be efficiently cleared by the proteasome (By similarity). Required for selective autophagic degradation of the nucleus (nucleophagy) as well as for mitophagy which contributes to regulate mitochondrial quantity and quality by eliminating the mitochondria to a basal level to fulfill cellular energy requirements and preventing excess ROS production (By similarity). Also involved in endoplasmic reticulum-specific autophagic process, in selective removal of ER-associated degradation (ERAD) substrates (By similarity). Plays a key role in ATG9 and ATG23 cycling through the pre-autophagosomal structure and is necessary to promote ATG18 binding to ATG9 through phosphorylation of ATG9. Catalyzes phosphorylation of ATG4, decreasing the interaction between ATG4 and ATG8 and impairing deconjugation of PE-conjugated forms of ATG8 (By similarity). Autophagy is required for proper vegetative growth, asexual/sexual reproduction, and full virulence (PubMed:28894236). Autophagy is particularly involved in the biosynthesis of deoxynivalenol (DON), an important virulence determinant (PubMed:28894236).</text>
</comment>
<comment type="catalytic activity">
    <reaction evidence="1">
        <text>L-seryl-[protein] + ATP = O-phospho-L-seryl-[protein] + ADP + H(+)</text>
        <dbReference type="Rhea" id="RHEA:17989"/>
        <dbReference type="Rhea" id="RHEA-COMP:9863"/>
        <dbReference type="Rhea" id="RHEA-COMP:11604"/>
        <dbReference type="ChEBI" id="CHEBI:15378"/>
        <dbReference type="ChEBI" id="CHEBI:29999"/>
        <dbReference type="ChEBI" id="CHEBI:30616"/>
        <dbReference type="ChEBI" id="CHEBI:83421"/>
        <dbReference type="ChEBI" id="CHEBI:456216"/>
        <dbReference type="EC" id="2.7.11.1"/>
    </reaction>
</comment>
<comment type="catalytic activity">
    <reaction evidence="1">
        <text>L-threonyl-[protein] + ATP = O-phospho-L-threonyl-[protein] + ADP + H(+)</text>
        <dbReference type="Rhea" id="RHEA:46608"/>
        <dbReference type="Rhea" id="RHEA-COMP:11060"/>
        <dbReference type="Rhea" id="RHEA-COMP:11605"/>
        <dbReference type="ChEBI" id="CHEBI:15378"/>
        <dbReference type="ChEBI" id="CHEBI:30013"/>
        <dbReference type="ChEBI" id="CHEBI:30616"/>
        <dbReference type="ChEBI" id="CHEBI:61977"/>
        <dbReference type="ChEBI" id="CHEBI:456216"/>
        <dbReference type="EC" id="2.7.11.1"/>
    </reaction>
</comment>
<comment type="subunit">
    <text evidence="1">Homodimer (By similarity). Dimerization requires the presence of ATG13 (By similarity). Forms a ternary complex with ATG13 and ATG17 (By similarity).</text>
</comment>
<comment type="subcellular location">
    <subcellularLocation>
        <location evidence="1">Cytoplasm</location>
    </subcellularLocation>
    <subcellularLocation>
        <location evidence="1">Preautophagosomal structure membrane</location>
        <topology evidence="1">Peripheral membrane protein</topology>
    </subcellularLocation>
</comment>
<comment type="domain">
    <text evidence="1">The LIR motif is required for the interaction with ATG8 and for the association of ATG1 with autophagosomes (By similarity).</text>
</comment>
<comment type="domain">
    <text evidence="2">The C-terminal region of ATG1 responsible for ATG13-binding comprises six alpha-helices which fold into two antiparallel three-helix bundles resembling each other (By similarity).</text>
</comment>
<comment type="disruption phenotype">
    <text evidence="5">Blocks autophagy (PubMed:28894236). Significantly decreases the radial growth of colonies under nutrient-rich conditions (PubMed:28894236). Strongly reduces conidiation and completely fails to form any perithecia (PubMed:28894236). Causes only mild infection in point-inoculated spikelets of flowering wheat heads and impairs the spreading to nearby spikelets (PubMed:28894236).</text>
</comment>
<comment type="similarity">
    <text evidence="7">Belongs to the protein kinase superfamily. Ser/Thr protein kinase family. APG1/unc-51/ULK1 subfamily.</text>
</comment>
<comment type="sequence caution" evidence="7">
    <conflict type="erroneous gene model prediction">
        <sequence resource="EMBL-CDS" id="SCB64773"/>
    </conflict>
</comment>
<protein>
    <recommendedName>
        <fullName evidence="7">Serine/threonine-protein kinase ATG1</fullName>
        <ecNumber evidence="1">2.7.11.1</ecNumber>
    </recommendedName>
    <alternativeName>
        <fullName evidence="6">Autophagy-related protein 1</fullName>
    </alternativeName>
</protein>
<reference key="1">
    <citation type="journal article" date="2007" name="Science">
        <title>The Fusarium graminearum genome reveals a link between localized polymorphism and pathogen specialization.</title>
        <authorList>
            <person name="Cuomo C.A."/>
            <person name="Gueldener U."/>
            <person name="Xu J.-R."/>
            <person name="Trail F."/>
            <person name="Turgeon B.G."/>
            <person name="Di Pietro A."/>
            <person name="Walton J.D."/>
            <person name="Ma L.-J."/>
            <person name="Baker S.E."/>
            <person name="Rep M."/>
            <person name="Adam G."/>
            <person name="Antoniw J."/>
            <person name="Baldwin T."/>
            <person name="Calvo S.E."/>
            <person name="Chang Y.-L."/>
            <person name="DeCaprio D."/>
            <person name="Gale L.R."/>
            <person name="Gnerre S."/>
            <person name="Goswami R.S."/>
            <person name="Hammond-Kosack K."/>
            <person name="Harris L.J."/>
            <person name="Hilburn K."/>
            <person name="Kennell J.C."/>
            <person name="Kroken S."/>
            <person name="Magnuson J.K."/>
            <person name="Mannhaupt G."/>
            <person name="Mauceli E.W."/>
            <person name="Mewes H.-W."/>
            <person name="Mitterbauer R."/>
            <person name="Muehlbauer G."/>
            <person name="Muensterkoetter M."/>
            <person name="Nelson D."/>
            <person name="O'Donnell K."/>
            <person name="Ouellet T."/>
            <person name="Qi W."/>
            <person name="Quesneville H."/>
            <person name="Roncero M.I.G."/>
            <person name="Seong K.-Y."/>
            <person name="Tetko I.V."/>
            <person name="Urban M."/>
            <person name="Waalwijk C."/>
            <person name="Ward T.J."/>
            <person name="Yao J."/>
            <person name="Birren B.W."/>
            <person name="Kistler H.C."/>
        </authorList>
    </citation>
    <scope>NUCLEOTIDE SEQUENCE [LARGE SCALE GENOMIC DNA]</scope>
    <source>
        <strain>ATCC MYA-4620 / CBS 123657 / FGSC 9075 / NRRL 31084 / PH-1</strain>
    </source>
</reference>
<reference key="2">
    <citation type="journal article" date="2010" name="Nature">
        <title>Comparative genomics reveals mobile pathogenicity chromosomes in Fusarium.</title>
        <authorList>
            <person name="Ma L.-J."/>
            <person name="van der Does H.C."/>
            <person name="Borkovich K.A."/>
            <person name="Coleman J.J."/>
            <person name="Daboussi M.-J."/>
            <person name="Di Pietro A."/>
            <person name="Dufresne M."/>
            <person name="Freitag M."/>
            <person name="Grabherr M."/>
            <person name="Henrissat B."/>
            <person name="Houterman P.M."/>
            <person name="Kang S."/>
            <person name="Shim W.-B."/>
            <person name="Woloshuk C."/>
            <person name="Xie X."/>
            <person name="Xu J.-R."/>
            <person name="Antoniw J."/>
            <person name="Baker S.E."/>
            <person name="Bluhm B.H."/>
            <person name="Breakspear A."/>
            <person name="Brown D.W."/>
            <person name="Butchko R.A.E."/>
            <person name="Chapman S."/>
            <person name="Coulson R."/>
            <person name="Coutinho P.M."/>
            <person name="Danchin E.G.J."/>
            <person name="Diener A."/>
            <person name="Gale L.R."/>
            <person name="Gardiner D.M."/>
            <person name="Goff S."/>
            <person name="Hammond-Kosack K.E."/>
            <person name="Hilburn K."/>
            <person name="Hua-Van A."/>
            <person name="Jonkers W."/>
            <person name="Kazan K."/>
            <person name="Kodira C.D."/>
            <person name="Koehrsen M."/>
            <person name="Kumar L."/>
            <person name="Lee Y.-H."/>
            <person name="Li L."/>
            <person name="Manners J.M."/>
            <person name="Miranda-Saavedra D."/>
            <person name="Mukherjee M."/>
            <person name="Park G."/>
            <person name="Park J."/>
            <person name="Park S.-Y."/>
            <person name="Proctor R.H."/>
            <person name="Regev A."/>
            <person name="Ruiz-Roldan M.C."/>
            <person name="Sain D."/>
            <person name="Sakthikumar S."/>
            <person name="Sykes S."/>
            <person name="Schwartz D.C."/>
            <person name="Turgeon B.G."/>
            <person name="Wapinski I."/>
            <person name="Yoder O."/>
            <person name="Young S."/>
            <person name="Zeng Q."/>
            <person name="Zhou S."/>
            <person name="Galagan J."/>
            <person name="Cuomo C.A."/>
            <person name="Kistler H.C."/>
            <person name="Rep M."/>
        </authorList>
    </citation>
    <scope>GENOME REANNOTATION</scope>
    <source>
        <strain>ATCC MYA-4620 / CBS 123657 / FGSC 9075 / NRRL 31084 / PH-1</strain>
    </source>
</reference>
<reference key="3">
    <citation type="journal article" date="2015" name="BMC Genomics">
        <title>The completed genome sequence of the pathogenic ascomycete fungus Fusarium graminearum.</title>
        <authorList>
            <person name="King R."/>
            <person name="Urban M."/>
            <person name="Hammond-Kosack M.C.U."/>
            <person name="Hassani-Pak K."/>
            <person name="Hammond-Kosack K.E."/>
        </authorList>
    </citation>
    <scope>NUCLEOTIDE SEQUENCE [LARGE SCALE GENOMIC DNA]</scope>
    <source>
        <strain>ATCC MYA-4620 / CBS 123657 / FGSC 9075 / NRRL 31084 / PH-1</strain>
    </source>
</reference>
<reference key="4">
    <citation type="journal article" date="2017" name="Sci. Rep.">
        <title>Genome-wide functional analysis reveals that autophagy is necessary for growth, sporulation, deoxynivalenol production and virulence in Fusarium graminearum.</title>
        <authorList>
            <person name="Lv W."/>
            <person name="Wang C."/>
            <person name="Yang N."/>
            <person name="Que Y."/>
            <person name="Talbot N.J."/>
            <person name="Wang Z."/>
        </authorList>
    </citation>
    <scope>IDENTIFICATION</scope>
    <scope>FUNCTION</scope>
    <scope>DISRUPTION PHENOTYPE</scope>
</reference>
<name>ATG1_GIBZE</name>